<proteinExistence type="inferred from homology"/>
<protein>
    <recommendedName>
        <fullName evidence="1">1-deoxy-D-xylulose-5-phosphate synthase</fullName>
        <ecNumber evidence="1">2.2.1.7</ecNumber>
    </recommendedName>
    <alternativeName>
        <fullName evidence="1">1-deoxyxylulose-5-phosphate synthase</fullName>
        <shortName evidence="1">DXP synthase</shortName>
        <shortName evidence="1">DXPS</shortName>
    </alternativeName>
</protein>
<evidence type="ECO:0000255" key="1">
    <source>
        <dbReference type="HAMAP-Rule" id="MF_00315"/>
    </source>
</evidence>
<organism>
    <name type="scientific">Aromatoleum aromaticum (strain DSM 19018 / LMG 30748 / EbN1)</name>
    <name type="common">Azoarcus sp. (strain EbN1)</name>
    <dbReference type="NCBI Taxonomy" id="76114"/>
    <lineage>
        <taxon>Bacteria</taxon>
        <taxon>Pseudomonadati</taxon>
        <taxon>Pseudomonadota</taxon>
        <taxon>Betaproteobacteria</taxon>
        <taxon>Rhodocyclales</taxon>
        <taxon>Rhodocyclaceae</taxon>
        <taxon>Aromatoleum</taxon>
    </lineage>
</organism>
<reference key="1">
    <citation type="journal article" date="2005" name="Arch. Microbiol.">
        <title>The genome sequence of an anaerobic aromatic-degrading denitrifying bacterium, strain EbN1.</title>
        <authorList>
            <person name="Rabus R."/>
            <person name="Kube M."/>
            <person name="Heider J."/>
            <person name="Beck A."/>
            <person name="Heitmann K."/>
            <person name="Widdel F."/>
            <person name="Reinhardt R."/>
        </authorList>
    </citation>
    <scope>NUCLEOTIDE SEQUENCE [LARGE SCALE GENOMIC DNA]</scope>
    <source>
        <strain>DSM 19018 / LMG 30748 / EbN1</strain>
    </source>
</reference>
<gene>
    <name evidence="1" type="primary">dxs</name>
    <name type="ordered locus">AZOSEA25110</name>
    <name type="ORF">ebA4439</name>
</gene>
<sequence>MPPYPLLHRIDSPFDLRKLDRRELPALAAELRAFLIESVSKTGGHLSSNLGTVELSIALHYIFDTPEDRIVWDVGHQTYGHKILTGRREAMSRLRQFGGISGFPRRSESSYDTFGTAHSSTSISAALGMAVAARNRGEQRRSIAVIGDGAMSAGMAFEALNNAGDMRDINLLVILNDNEMSISPPVGALTKILARMFSGRTYNAARRAGEKVLGVSPPMLDFARKVEEHVKGLITPGTLFEEFGFHYYGPIDGHDLDALIPTLQNLRKLNGPHFLHVITRKGQGYKLAEADPVLYHGVSTFDHTAGIQTAKGAAKLTYTQVFGDWLCDIAAQDEKVIGITPAMREGSGMVRFAQEFPNRYYDVGIAEQHALTFAAGLACEGFKPVVAIYSTFLQRAYDQLIHDIALQNLPVMFAIDRAGLVGADGATHHGAFDLSYLGCIPNLVVMAPADENECRQMLYTAYRHNGPAAVRYPRGGGMQVGPETAMSALPIGKGEIRRSGHRIALLVFGSLLFNALQAAEQLDATVANMRFVKPLDVTLIEELAASHDLLVTLEENIVIGGAGSEVARVLESLSDRPQLLRLGLPDTFIDHGDQSQLLESVGLDAPGIVAAIRRRFSPDNN</sequence>
<name>DXS_AROAE</name>
<keyword id="KW-0414">Isoprene biosynthesis</keyword>
<keyword id="KW-0460">Magnesium</keyword>
<keyword id="KW-0479">Metal-binding</keyword>
<keyword id="KW-1185">Reference proteome</keyword>
<keyword id="KW-0784">Thiamine biosynthesis</keyword>
<keyword id="KW-0786">Thiamine pyrophosphate</keyword>
<keyword id="KW-0808">Transferase</keyword>
<dbReference type="EC" id="2.2.1.7" evidence="1"/>
<dbReference type="EMBL" id="CR555306">
    <property type="protein sequence ID" value="CAI08636.1"/>
    <property type="molecule type" value="Genomic_DNA"/>
</dbReference>
<dbReference type="RefSeq" id="WP_011238320.1">
    <property type="nucleotide sequence ID" value="NC_006513.1"/>
</dbReference>
<dbReference type="SMR" id="Q5P228"/>
<dbReference type="STRING" id="76114.ebA4439"/>
<dbReference type="KEGG" id="eba:ebA4439"/>
<dbReference type="eggNOG" id="COG1154">
    <property type="taxonomic scope" value="Bacteria"/>
</dbReference>
<dbReference type="HOGENOM" id="CLU_009227_1_4_4"/>
<dbReference type="OrthoDB" id="9803371at2"/>
<dbReference type="UniPathway" id="UPA00064">
    <property type="reaction ID" value="UER00091"/>
</dbReference>
<dbReference type="Proteomes" id="UP000006552">
    <property type="component" value="Chromosome"/>
</dbReference>
<dbReference type="GO" id="GO:0005829">
    <property type="term" value="C:cytosol"/>
    <property type="evidence" value="ECO:0007669"/>
    <property type="project" value="TreeGrafter"/>
</dbReference>
<dbReference type="GO" id="GO:0008661">
    <property type="term" value="F:1-deoxy-D-xylulose-5-phosphate synthase activity"/>
    <property type="evidence" value="ECO:0007669"/>
    <property type="project" value="UniProtKB-UniRule"/>
</dbReference>
<dbReference type="GO" id="GO:0000287">
    <property type="term" value="F:magnesium ion binding"/>
    <property type="evidence" value="ECO:0007669"/>
    <property type="project" value="UniProtKB-UniRule"/>
</dbReference>
<dbReference type="GO" id="GO:0030976">
    <property type="term" value="F:thiamine pyrophosphate binding"/>
    <property type="evidence" value="ECO:0007669"/>
    <property type="project" value="UniProtKB-UniRule"/>
</dbReference>
<dbReference type="GO" id="GO:0052865">
    <property type="term" value="P:1-deoxy-D-xylulose 5-phosphate biosynthetic process"/>
    <property type="evidence" value="ECO:0007669"/>
    <property type="project" value="UniProtKB-UniPathway"/>
</dbReference>
<dbReference type="GO" id="GO:0019288">
    <property type="term" value="P:isopentenyl diphosphate biosynthetic process, methylerythritol 4-phosphate pathway"/>
    <property type="evidence" value="ECO:0007669"/>
    <property type="project" value="TreeGrafter"/>
</dbReference>
<dbReference type="GO" id="GO:0016114">
    <property type="term" value="P:terpenoid biosynthetic process"/>
    <property type="evidence" value="ECO:0007669"/>
    <property type="project" value="UniProtKB-UniRule"/>
</dbReference>
<dbReference type="GO" id="GO:0009228">
    <property type="term" value="P:thiamine biosynthetic process"/>
    <property type="evidence" value="ECO:0007669"/>
    <property type="project" value="UniProtKB-UniRule"/>
</dbReference>
<dbReference type="CDD" id="cd02007">
    <property type="entry name" value="TPP_DXS"/>
    <property type="match status" value="1"/>
</dbReference>
<dbReference type="CDD" id="cd07033">
    <property type="entry name" value="TPP_PYR_DXS_TK_like"/>
    <property type="match status" value="1"/>
</dbReference>
<dbReference type="FunFam" id="3.40.50.920:FF:000002">
    <property type="entry name" value="1-deoxy-D-xylulose-5-phosphate synthase"/>
    <property type="match status" value="1"/>
</dbReference>
<dbReference type="FunFam" id="3.40.50.970:FF:000005">
    <property type="entry name" value="1-deoxy-D-xylulose-5-phosphate synthase"/>
    <property type="match status" value="1"/>
</dbReference>
<dbReference type="Gene3D" id="3.40.50.920">
    <property type="match status" value="1"/>
</dbReference>
<dbReference type="Gene3D" id="3.40.50.970">
    <property type="match status" value="2"/>
</dbReference>
<dbReference type="HAMAP" id="MF_00315">
    <property type="entry name" value="DXP_synth"/>
    <property type="match status" value="1"/>
</dbReference>
<dbReference type="InterPro" id="IPR005477">
    <property type="entry name" value="Dxylulose-5-P_synthase"/>
</dbReference>
<dbReference type="InterPro" id="IPR029061">
    <property type="entry name" value="THDP-binding"/>
</dbReference>
<dbReference type="InterPro" id="IPR009014">
    <property type="entry name" value="Transketo_C/PFOR_II"/>
</dbReference>
<dbReference type="InterPro" id="IPR005475">
    <property type="entry name" value="Transketolase-like_Pyr-bd"/>
</dbReference>
<dbReference type="InterPro" id="IPR020826">
    <property type="entry name" value="Transketolase_BS"/>
</dbReference>
<dbReference type="InterPro" id="IPR033248">
    <property type="entry name" value="Transketolase_C"/>
</dbReference>
<dbReference type="InterPro" id="IPR049557">
    <property type="entry name" value="Transketolase_CS"/>
</dbReference>
<dbReference type="NCBIfam" id="TIGR00204">
    <property type="entry name" value="dxs"/>
    <property type="match status" value="1"/>
</dbReference>
<dbReference type="NCBIfam" id="NF003933">
    <property type="entry name" value="PRK05444.2-2"/>
    <property type="match status" value="1"/>
</dbReference>
<dbReference type="PANTHER" id="PTHR43322">
    <property type="entry name" value="1-D-DEOXYXYLULOSE 5-PHOSPHATE SYNTHASE-RELATED"/>
    <property type="match status" value="1"/>
</dbReference>
<dbReference type="PANTHER" id="PTHR43322:SF5">
    <property type="entry name" value="1-DEOXY-D-XYLULOSE-5-PHOSPHATE SYNTHASE, CHLOROPLASTIC"/>
    <property type="match status" value="1"/>
</dbReference>
<dbReference type="Pfam" id="PF13292">
    <property type="entry name" value="DXP_synthase_N"/>
    <property type="match status" value="1"/>
</dbReference>
<dbReference type="Pfam" id="PF02779">
    <property type="entry name" value="Transket_pyr"/>
    <property type="match status" value="1"/>
</dbReference>
<dbReference type="Pfam" id="PF02780">
    <property type="entry name" value="Transketolase_C"/>
    <property type="match status" value="1"/>
</dbReference>
<dbReference type="SMART" id="SM00861">
    <property type="entry name" value="Transket_pyr"/>
    <property type="match status" value="1"/>
</dbReference>
<dbReference type="SUPFAM" id="SSF52518">
    <property type="entry name" value="Thiamin diphosphate-binding fold (THDP-binding)"/>
    <property type="match status" value="2"/>
</dbReference>
<dbReference type="SUPFAM" id="SSF52922">
    <property type="entry name" value="TK C-terminal domain-like"/>
    <property type="match status" value="1"/>
</dbReference>
<dbReference type="PROSITE" id="PS00801">
    <property type="entry name" value="TRANSKETOLASE_1"/>
    <property type="match status" value="1"/>
</dbReference>
<dbReference type="PROSITE" id="PS00802">
    <property type="entry name" value="TRANSKETOLASE_2"/>
    <property type="match status" value="1"/>
</dbReference>
<accession>Q5P228</accession>
<feature type="chain" id="PRO_0000256372" description="1-deoxy-D-xylulose-5-phosphate synthase">
    <location>
        <begin position="1"/>
        <end position="621"/>
    </location>
</feature>
<feature type="binding site" evidence="1">
    <location>
        <position position="76"/>
    </location>
    <ligand>
        <name>thiamine diphosphate</name>
        <dbReference type="ChEBI" id="CHEBI:58937"/>
    </ligand>
</feature>
<feature type="binding site" evidence="1">
    <location>
        <begin position="117"/>
        <end position="119"/>
    </location>
    <ligand>
        <name>thiamine diphosphate</name>
        <dbReference type="ChEBI" id="CHEBI:58937"/>
    </ligand>
</feature>
<feature type="binding site" evidence="1">
    <location>
        <position position="148"/>
    </location>
    <ligand>
        <name>Mg(2+)</name>
        <dbReference type="ChEBI" id="CHEBI:18420"/>
    </ligand>
</feature>
<feature type="binding site" evidence="1">
    <location>
        <begin position="149"/>
        <end position="150"/>
    </location>
    <ligand>
        <name>thiamine diphosphate</name>
        <dbReference type="ChEBI" id="CHEBI:58937"/>
    </ligand>
</feature>
<feature type="binding site" evidence="1">
    <location>
        <position position="178"/>
    </location>
    <ligand>
        <name>Mg(2+)</name>
        <dbReference type="ChEBI" id="CHEBI:18420"/>
    </ligand>
</feature>
<feature type="binding site" evidence="1">
    <location>
        <position position="178"/>
    </location>
    <ligand>
        <name>thiamine diphosphate</name>
        <dbReference type="ChEBI" id="CHEBI:58937"/>
    </ligand>
</feature>
<feature type="binding site" evidence="1">
    <location>
        <position position="285"/>
    </location>
    <ligand>
        <name>thiamine diphosphate</name>
        <dbReference type="ChEBI" id="CHEBI:58937"/>
    </ligand>
</feature>
<feature type="binding site" evidence="1">
    <location>
        <position position="367"/>
    </location>
    <ligand>
        <name>thiamine diphosphate</name>
        <dbReference type="ChEBI" id="CHEBI:58937"/>
    </ligand>
</feature>
<comment type="function">
    <text evidence="1">Catalyzes the acyloin condensation reaction between C atoms 2 and 3 of pyruvate and glyceraldehyde 3-phosphate to yield 1-deoxy-D-xylulose-5-phosphate (DXP).</text>
</comment>
<comment type="catalytic activity">
    <reaction evidence="1">
        <text>D-glyceraldehyde 3-phosphate + pyruvate + H(+) = 1-deoxy-D-xylulose 5-phosphate + CO2</text>
        <dbReference type="Rhea" id="RHEA:12605"/>
        <dbReference type="ChEBI" id="CHEBI:15361"/>
        <dbReference type="ChEBI" id="CHEBI:15378"/>
        <dbReference type="ChEBI" id="CHEBI:16526"/>
        <dbReference type="ChEBI" id="CHEBI:57792"/>
        <dbReference type="ChEBI" id="CHEBI:59776"/>
        <dbReference type="EC" id="2.2.1.7"/>
    </reaction>
</comment>
<comment type="cofactor">
    <cofactor evidence="1">
        <name>Mg(2+)</name>
        <dbReference type="ChEBI" id="CHEBI:18420"/>
    </cofactor>
    <text evidence="1">Binds 1 Mg(2+) ion per subunit.</text>
</comment>
<comment type="cofactor">
    <cofactor evidence="1">
        <name>thiamine diphosphate</name>
        <dbReference type="ChEBI" id="CHEBI:58937"/>
    </cofactor>
    <text evidence="1">Binds 1 thiamine pyrophosphate per subunit.</text>
</comment>
<comment type="pathway">
    <text evidence="1">Metabolic intermediate biosynthesis; 1-deoxy-D-xylulose 5-phosphate biosynthesis; 1-deoxy-D-xylulose 5-phosphate from D-glyceraldehyde 3-phosphate and pyruvate: step 1/1.</text>
</comment>
<comment type="subunit">
    <text evidence="1">Homodimer.</text>
</comment>
<comment type="similarity">
    <text evidence="1">Belongs to the transketolase family. DXPS subfamily.</text>
</comment>